<gene>
    <name type="primary">hisZ</name>
    <name type="ordered locus">DR_1444</name>
</gene>
<accession>Q9RUE3</accession>
<feature type="chain" id="PRO_0000171034" description="ATP phosphoribosyltransferase regulatory subunit">
    <location>
        <begin position="1"/>
        <end position="406"/>
    </location>
</feature>
<protein>
    <recommendedName>
        <fullName>ATP phosphoribosyltransferase regulatory subunit</fullName>
    </recommendedName>
</protein>
<comment type="function">
    <text evidence="1">Required for the first step of histidine biosynthesis. May allow the feedback regulation of ATP phosphoribosyltransferase activity by histidine (By similarity).</text>
</comment>
<comment type="pathway">
    <text>Amino-acid biosynthesis; L-histidine biosynthesis; L-histidine from 5-phospho-alpha-D-ribose 1-diphosphate: step 1/9.</text>
</comment>
<comment type="subunit">
    <text evidence="1">Heteromultimer composed of HisG and HisZ subunits.</text>
</comment>
<comment type="subcellular location">
    <subcellularLocation>
        <location evidence="1">Cytoplasm</location>
    </subcellularLocation>
</comment>
<comment type="miscellaneous">
    <text>This function is generally fulfilled by the C-terminal part of HisG, which is missing in some bacteria such as this one.</text>
</comment>
<comment type="similarity">
    <text evidence="2">Belongs to the class-II aminoacyl-tRNA synthetase family. HisZ subfamily.</text>
</comment>
<dbReference type="EMBL" id="AE000513">
    <property type="protein sequence ID" value="AAF11015.1"/>
    <property type="molecule type" value="Genomic_DNA"/>
</dbReference>
<dbReference type="PIR" id="B75394">
    <property type="entry name" value="B75394"/>
</dbReference>
<dbReference type="RefSeq" id="NP_295167.1">
    <property type="nucleotide sequence ID" value="NC_001263.1"/>
</dbReference>
<dbReference type="RefSeq" id="WP_010888083.1">
    <property type="nucleotide sequence ID" value="NC_001263.1"/>
</dbReference>
<dbReference type="SMR" id="Q9RUE3"/>
<dbReference type="FunCoup" id="Q9RUE3">
    <property type="interactions" value="87"/>
</dbReference>
<dbReference type="STRING" id="243230.DR_1444"/>
<dbReference type="PaxDb" id="243230-DR_1444"/>
<dbReference type="EnsemblBacteria" id="AAF11015">
    <property type="protein sequence ID" value="AAF11015"/>
    <property type="gene ID" value="DR_1444"/>
</dbReference>
<dbReference type="GeneID" id="69517685"/>
<dbReference type="KEGG" id="dra:DR_1444"/>
<dbReference type="PATRIC" id="fig|243230.17.peg.1641"/>
<dbReference type="eggNOG" id="COG3705">
    <property type="taxonomic scope" value="Bacteria"/>
</dbReference>
<dbReference type="HOGENOM" id="CLU_025113_0_2_0"/>
<dbReference type="InParanoid" id="Q9RUE3"/>
<dbReference type="OrthoDB" id="9800814at2"/>
<dbReference type="UniPathway" id="UPA00031">
    <property type="reaction ID" value="UER00006"/>
</dbReference>
<dbReference type="Proteomes" id="UP000002524">
    <property type="component" value="Chromosome 1"/>
</dbReference>
<dbReference type="GO" id="GO:0005737">
    <property type="term" value="C:cytoplasm"/>
    <property type="evidence" value="ECO:0007669"/>
    <property type="project" value="UniProtKB-SubCell"/>
</dbReference>
<dbReference type="GO" id="GO:0004821">
    <property type="term" value="F:histidine-tRNA ligase activity"/>
    <property type="evidence" value="ECO:0000318"/>
    <property type="project" value="GO_Central"/>
</dbReference>
<dbReference type="GO" id="GO:0006427">
    <property type="term" value="P:histidyl-tRNA aminoacylation"/>
    <property type="evidence" value="ECO:0000318"/>
    <property type="project" value="GO_Central"/>
</dbReference>
<dbReference type="GO" id="GO:0000105">
    <property type="term" value="P:L-histidine biosynthetic process"/>
    <property type="evidence" value="ECO:0007669"/>
    <property type="project" value="UniProtKB-UniRule"/>
</dbReference>
<dbReference type="CDD" id="cd00773">
    <property type="entry name" value="HisRS-like_core"/>
    <property type="match status" value="1"/>
</dbReference>
<dbReference type="Gene3D" id="3.30.930.10">
    <property type="entry name" value="Bira Bifunctional Protein, Domain 2"/>
    <property type="match status" value="1"/>
</dbReference>
<dbReference type="HAMAP" id="MF_00125">
    <property type="entry name" value="HisZ"/>
    <property type="match status" value="1"/>
</dbReference>
<dbReference type="InterPro" id="IPR045864">
    <property type="entry name" value="aa-tRNA-synth_II/BPL/LPL"/>
</dbReference>
<dbReference type="InterPro" id="IPR041715">
    <property type="entry name" value="HisRS-like_core"/>
</dbReference>
<dbReference type="InterPro" id="IPR004516">
    <property type="entry name" value="HisRS/HisZ"/>
</dbReference>
<dbReference type="InterPro" id="IPR004517">
    <property type="entry name" value="HisZ"/>
</dbReference>
<dbReference type="NCBIfam" id="TIGR00443">
    <property type="entry name" value="hisZ_biosyn_reg"/>
    <property type="match status" value="1"/>
</dbReference>
<dbReference type="NCBIfam" id="NF008943">
    <property type="entry name" value="PRK12292.3-1"/>
    <property type="match status" value="1"/>
</dbReference>
<dbReference type="PANTHER" id="PTHR43707:SF1">
    <property type="entry name" value="HISTIDINE--TRNA LIGASE, MITOCHONDRIAL-RELATED"/>
    <property type="match status" value="1"/>
</dbReference>
<dbReference type="PANTHER" id="PTHR43707">
    <property type="entry name" value="HISTIDYL-TRNA SYNTHETASE"/>
    <property type="match status" value="1"/>
</dbReference>
<dbReference type="Pfam" id="PF13393">
    <property type="entry name" value="tRNA-synt_His"/>
    <property type="match status" value="1"/>
</dbReference>
<dbReference type="SUPFAM" id="SSF55681">
    <property type="entry name" value="Class II aaRS and biotin synthetases"/>
    <property type="match status" value="1"/>
</dbReference>
<sequence length="406" mass="42851">MRRVSVSDPLPFSAPLAAGGEALSTSALPAGVRDVLPAEWERREHLRSHLSALLRSWGYRGVDLPALELADPAHPQGNHAFKLIDSGGQVLALRSEYTTALGRLVGTHFPSGPFPLRLQYGGRLWLRTQTSELGRLREFNQVGAELIGVTGVQADAELLALAHAALGQAGVQAQLEVGFPGFVDAALTDAGLPGPVRAALHDAIDRKSGADLDLLARQHGVSPEVTRTLHSLTELYGGPEVLTEARVLARGVRAEQAVEHLSAVHAAAQEAGVELLFDLGVSRRYGYYTGLTFRAYVDGINQPVLGGGRYALPGGLPGAGFAIGLERLAAVMPAGVPSEPETVLALDFAAATAARAAGLGAELAWTGDEAELRHYAQARGLRRWVQGAELRDVTPADLKIATEVNA</sequence>
<keyword id="KW-0028">Amino-acid biosynthesis</keyword>
<keyword id="KW-0963">Cytoplasm</keyword>
<keyword id="KW-0368">Histidine biosynthesis</keyword>
<keyword id="KW-1185">Reference proteome</keyword>
<name>HISZ_DEIRA</name>
<organism>
    <name type="scientific">Deinococcus radiodurans (strain ATCC 13939 / DSM 20539 / JCM 16871 / CCUG 27074 / LMG 4051 / NBRC 15346 / NCIMB 9279 / VKM B-1422 / R1)</name>
    <dbReference type="NCBI Taxonomy" id="243230"/>
    <lineage>
        <taxon>Bacteria</taxon>
        <taxon>Thermotogati</taxon>
        <taxon>Deinococcota</taxon>
        <taxon>Deinococci</taxon>
        <taxon>Deinococcales</taxon>
        <taxon>Deinococcaceae</taxon>
        <taxon>Deinococcus</taxon>
    </lineage>
</organism>
<proteinExistence type="inferred from homology"/>
<reference key="1">
    <citation type="journal article" date="1999" name="Science">
        <title>Genome sequence of the radioresistant bacterium Deinococcus radiodurans R1.</title>
        <authorList>
            <person name="White O."/>
            <person name="Eisen J.A."/>
            <person name="Heidelberg J.F."/>
            <person name="Hickey E.K."/>
            <person name="Peterson J.D."/>
            <person name="Dodson R.J."/>
            <person name="Haft D.H."/>
            <person name="Gwinn M.L."/>
            <person name="Nelson W.C."/>
            <person name="Richardson D.L."/>
            <person name="Moffat K.S."/>
            <person name="Qin H."/>
            <person name="Jiang L."/>
            <person name="Pamphile W."/>
            <person name="Crosby M."/>
            <person name="Shen M."/>
            <person name="Vamathevan J.J."/>
            <person name="Lam P."/>
            <person name="McDonald L.A."/>
            <person name="Utterback T.R."/>
            <person name="Zalewski C."/>
            <person name="Makarova K.S."/>
            <person name="Aravind L."/>
            <person name="Daly M.J."/>
            <person name="Minton K.W."/>
            <person name="Fleischmann R.D."/>
            <person name="Ketchum K.A."/>
            <person name="Nelson K.E."/>
            <person name="Salzberg S.L."/>
            <person name="Smith H.O."/>
            <person name="Venter J.C."/>
            <person name="Fraser C.M."/>
        </authorList>
    </citation>
    <scope>NUCLEOTIDE SEQUENCE [LARGE SCALE GENOMIC DNA]</scope>
    <source>
        <strain>ATCC 13939 / DSM 20539 / JCM 16871 / CCUG 27074 / LMG 4051 / NBRC 15346 / NCIMB 9279 / VKM B-1422 / R1</strain>
    </source>
</reference>
<evidence type="ECO:0000250" key="1"/>
<evidence type="ECO:0000305" key="2"/>